<dbReference type="EMBL" id="DQ216283">
    <property type="protein sequence ID" value="ACH45587.1"/>
    <property type="molecule type" value="mRNA"/>
</dbReference>
<dbReference type="RefSeq" id="NP_001232051.1">
    <property type="nucleotide sequence ID" value="NM_001245122.1"/>
</dbReference>
<dbReference type="FunCoup" id="B5G2S6">
    <property type="interactions" value="235"/>
</dbReference>
<dbReference type="STRING" id="59729.ENSTGUP00000037480"/>
<dbReference type="GlyCosmos" id="B5G2S6">
    <property type="glycosylation" value="1 site, No reported glycans"/>
</dbReference>
<dbReference type="Ensembl" id="ENSTGUT00000035391.1">
    <property type="protein sequence ID" value="ENSTGUP00000037480.1"/>
    <property type="gene ID" value="ENSTGUG00000019292.1"/>
</dbReference>
<dbReference type="GeneID" id="100190468"/>
<dbReference type="KEGG" id="tgu:100190468"/>
<dbReference type="CTD" id="153339"/>
<dbReference type="GeneTree" id="ENSGT00940000155186"/>
<dbReference type="InParanoid" id="B5G2S6"/>
<dbReference type="OMA" id="KVGFQGT"/>
<dbReference type="OrthoDB" id="10034655at2759"/>
<dbReference type="Proteomes" id="UP000007754">
    <property type="component" value="Chromosome Z"/>
</dbReference>
<dbReference type="GO" id="GO:0000139">
    <property type="term" value="C:Golgi membrane"/>
    <property type="evidence" value="ECO:0007669"/>
    <property type="project" value="UniProtKB-SubCell"/>
</dbReference>
<dbReference type="GO" id="GO:0045054">
    <property type="term" value="P:constitutive secretory pathway"/>
    <property type="evidence" value="ECO:0007669"/>
    <property type="project" value="Ensembl"/>
</dbReference>
<dbReference type="InterPro" id="IPR051523">
    <property type="entry name" value="KISH_domain"/>
</dbReference>
<dbReference type="InterPro" id="IPR009653">
    <property type="entry name" value="Ksh1"/>
</dbReference>
<dbReference type="PANTHER" id="PTHR13229">
    <property type="entry name" value="PROTEIN KISH-A"/>
    <property type="match status" value="1"/>
</dbReference>
<dbReference type="Pfam" id="PF06842">
    <property type="entry name" value="DUF1242"/>
    <property type="match status" value="1"/>
</dbReference>
<evidence type="ECO:0000250" key="1"/>
<evidence type="ECO:0000255" key="2"/>
<evidence type="ECO:0000305" key="3"/>
<organism>
    <name type="scientific">Taeniopygia guttata</name>
    <name type="common">Zebra finch</name>
    <name type="synonym">Poephila guttata</name>
    <dbReference type="NCBI Taxonomy" id="59729"/>
    <lineage>
        <taxon>Eukaryota</taxon>
        <taxon>Metazoa</taxon>
        <taxon>Chordata</taxon>
        <taxon>Craniata</taxon>
        <taxon>Vertebrata</taxon>
        <taxon>Euteleostomi</taxon>
        <taxon>Archelosauria</taxon>
        <taxon>Archosauria</taxon>
        <taxon>Dinosauria</taxon>
        <taxon>Saurischia</taxon>
        <taxon>Theropoda</taxon>
        <taxon>Coelurosauria</taxon>
        <taxon>Aves</taxon>
        <taxon>Neognathae</taxon>
        <taxon>Neoaves</taxon>
        <taxon>Telluraves</taxon>
        <taxon>Australaves</taxon>
        <taxon>Passeriformes</taxon>
        <taxon>Passeroidea</taxon>
        <taxon>Estrildidae</taxon>
        <taxon>Estrildinae</taxon>
        <taxon>Taeniopygia</taxon>
    </lineage>
</organism>
<gene>
    <name type="primary">TMEM167A</name>
</gene>
<accession>B5G2S6</accession>
<reference key="1">
    <citation type="journal article" date="2006" name="Proc. Natl. Acad. Sci. U.S.A.">
        <title>A molecular neuroethological approach for identifying and characterizing a cascade of behaviorally regulated genes.</title>
        <authorList>
            <person name="Wada K."/>
            <person name="Howard J.T."/>
            <person name="McConnell P."/>
            <person name="Whitney O."/>
            <person name="Lints T."/>
            <person name="Rivas M.V."/>
            <person name="Horita H."/>
            <person name="Patterson M.A."/>
            <person name="White S.A."/>
            <person name="Scharff C."/>
            <person name="Haesler S."/>
            <person name="Zhao S."/>
            <person name="Sakaguchi H."/>
            <person name="Hagiwara M."/>
            <person name="Shiraki T."/>
            <person name="Hirozane-Kishikawa T."/>
            <person name="Skene P."/>
            <person name="Hayashizaki Y."/>
            <person name="Carninci P."/>
            <person name="Jarvis E.D."/>
        </authorList>
    </citation>
    <scope>NUCLEOTIDE SEQUENCE [LARGE SCALE MRNA]</scope>
    <source>
        <tissue>Brain</tissue>
    </source>
</reference>
<feature type="signal peptide" evidence="2">
    <location>
        <begin position="1"/>
        <end position="26"/>
    </location>
</feature>
<feature type="chain" id="PRO_0000367273" description="Protein kish-A">
    <location>
        <begin position="27"/>
        <end position="72"/>
    </location>
</feature>
<feature type="topological domain" description="Extracellular" evidence="2">
    <location>
        <begin position="27"/>
        <end position="53"/>
    </location>
</feature>
<feature type="transmembrane region" description="Helical" evidence="2">
    <location>
        <begin position="54"/>
        <end position="71"/>
    </location>
</feature>
<feature type="topological domain" description="Cytoplasmic" evidence="2">
    <location>
        <position position="72"/>
    </location>
</feature>
<feature type="glycosylation site" description="N-linked (GlcNAc...) asparagine" evidence="2">
    <location>
        <position position="35"/>
    </location>
</feature>
<keyword id="KW-0325">Glycoprotein</keyword>
<keyword id="KW-0333">Golgi apparatus</keyword>
<keyword id="KW-0472">Membrane</keyword>
<keyword id="KW-1185">Reference proteome</keyword>
<keyword id="KW-0732">Signal</keyword>
<keyword id="KW-0812">Transmembrane</keyword>
<keyword id="KW-1133">Transmembrane helix</keyword>
<name>KISHA_TAEGU</name>
<sequence>MSAIFNFQSLLTVILLLICTCAYIRSLAPSLLDKNKSGLLGIFWKCARIGERKSPYVAVCCVVMAFSILFMQ</sequence>
<proteinExistence type="inferred from homology"/>
<protein>
    <recommendedName>
        <fullName>Protein kish-A</fullName>
    </recommendedName>
    <alternativeName>
        <fullName>Transmembrane protein 167A</fullName>
    </alternativeName>
</protein>
<comment type="function">
    <text evidence="1">Involved in the early part of the secretory pathway.</text>
</comment>
<comment type="subcellular location">
    <subcellularLocation>
        <location evidence="1">Golgi apparatus membrane</location>
        <topology evidence="1">Single-pass type I membrane protein</topology>
    </subcellularLocation>
</comment>
<comment type="similarity">
    <text evidence="3">Belongs to the KISH family.</text>
</comment>